<name>MSLN_HUMAN</name>
<dbReference type="EMBL" id="D49441">
    <property type="protein sequence ID" value="BAA08419.1"/>
    <property type="molecule type" value="mRNA"/>
</dbReference>
<dbReference type="EMBL" id="U40434">
    <property type="protein sequence ID" value="AAC50348.1"/>
    <property type="molecule type" value="mRNA"/>
</dbReference>
<dbReference type="EMBL" id="AY743922">
    <property type="protein sequence ID" value="AAV87530.1"/>
    <property type="molecule type" value="mRNA"/>
</dbReference>
<dbReference type="EMBL" id="AE006464">
    <property type="protein sequence ID" value="AAK61253.1"/>
    <property type="molecule type" value="Genomic_DNA"/>
</dbReference>
<dbReference type="EMBL" id="AL031258">
    <property type="status" value="NOT_ANNOTATED_CDS"/>
    <property type="molecule type" value="Genomic_DNA"/>
</dbReference>
<dbReference type="EMBL" id="CH471112">
    <property type="protein sequence ID" value="EAW85719.1"/>
    <property type="molecule type" value="Genomic_DNA"/>
</dbReference>
<dbReference type="EMBL" id="CH471112">
    <property type="protein sequence ID" value="EAW85720.1"/>
    <property type="molecule type" value="Genomic_DNA"/>
</dbReference>
<dbReference type="EMBL" id="BC003512">
    <property type="protein sequence ID" value="AAH03512.1"/>
    <property type="molecule type" value="mRNA"/>
</dbReference>
<dbReference type="EMBL" id="BC009272">
    <property type="protein sequence ID" value="AAH09272.1"/>
    <property type="molecule type" value="mRNA"/>
</dbReference>
<dbReference type="EMBL" id="AF180951">
    <property type="protein sequence ID" value="AAF01409.1"/>
    <property type="molecule type" value="mRNA"/>
</dbReference>
<dbReference type="CCDS" id="CCDS32356.1">
    <molecule id="Q13421-1"/>
</dbReference>
<dbReference type="CCDS" id="CCDS45370.1">
    <molecule id="Q13421-3"/>
</dbReference>
<dbReference type="RefSeq" id="NP_001170826.1">
    <molecule id="Q13421-3"/>
    <property type="nucleotide sequence ID" value="NM_001177355.3"/>
</dbReference>
<dbReference type="RefSeq" id="NP_005814.2">
    <molecule id="Q13421-3"/>
    <property type="nucleotide sequence ID" value="NM_005823.6"/>
</dbReference>
<dbReference type="RefSeq" id="NP_037536.2">
    <molecule id="Q13421-1"/>
    <property type="nucleotide sequence ID" value="NM_013404.4"/>
</dbReference>
<dbReference type="RefSeq" id="XP_005255091.1">
    <property type="nucleotide sequence ID" value="XM_005255034.4"/>
</dbReference>
<dbReference type="RefSeq" id="XP_011520650.1">
    <property type="nucleotide sequence ID" value="XM_011522348.2"/>
</dbReference>
<dbReference type="RefSeq" id="XP_016878346.1">
    <property type="nucleotide sequence ID" value="XM_017022857.1"/>
</dbReference>
<dbReference type="PDB" id="4F3F">
    <property type="method" value="X-ray"/>
    <property type="resolution" value="2.65 A"/>
    <property type="chains" value="C=302-359"/>
</dbReference>
<dbReference type="PDB" id="7U8C">
    <property type="method" value="X-ray"/>
    <property type="resolution" value="1.74 A"/>
    <property type="chains" value="BA2=590-606"/>
</dbReference>
<dbReference type="PDB" id="7U9J">
    <property type="method" value="X-ray"/>
    <property type="resolution" value="2.09 A"/>
    <property type="chains" value="A/B=296-509"/>
</dbReference>
<dbReference type="PDB" id="7UED">
    <property type="method" value="X-ray"/>
    <property type="resolution" value="3.00 A"/>
    <property type="chains" value="M=296-608"/>
</dbReference>
<dbReference type="PDB" id="8CX3">
    <property type="method" value="X-ray"/>
    <property type="resolution" value="3.61 A"/>
    <property type="chains" value="A/B/C/D/E/F=296-608"/>
</dbReference>
<dbReference type="PDB" id="8CXC">
    <property type="method" value="X-ray"/>
    <property type="resolution" value="4.31 A"/>
    <property type="chains" value="M=296-605"/>
</dbReference>
<dbReference type="PDB" id="8CYH">
    <property type="method" value="X-ray"/>
    <property type="resolution" value="3.38 A"/>
    <property type="chains" value="M=296-605"/>
</dbReference>
<dbReference type="PDB" id="8CZ8">
    <property type="method" value="X-ray"/>
    <property type="resolution" value="2.60 A"/>
    <property type="chains" value="E/M=434-590"/>
</dbReference>
<dbReference type="PDB" id="8FSL">
    <property type="method" value="X-ray"/>
    <property type="resolution" value="2.90 A"/>
    <property type="chains" value="E/F=300-592"/>
</dbReference>
<dbReference type="PDB" id="8VM1">
    <property type="method" value="X-ray"/>
    <property type="resolution" value="2.65 A"/>
    <property type="chains" value="A=296-359"/>
</dbReference>
<dbReference type="PDBsum" id="4F3F"/>
<dbReference type="PDBsum" id="7U8C"/>
<dbReference type="PDBsum" id="7U9J"/>
<dbReference type="PDBsum" id="7UED"/>
<dbReference type="PDBsum" id="8CX3"/>
<dbReference type="PDBsum" id="8CXC"/>
<dbReference type="PDBsum" id="8CYH"/>
<dbReference type="PDBsum" id="8CZ8"/>
<dbReference type="PDBsum" id="8FSL"/>
<dbReference type="PDBsum" id="8VM1"/>
<dbReference type="SMR" id="Q13421"/>
<dbReference type="BioGRID" id="115526">
    <property type="interactions" value="80"/>
</dbReference>
<dbReference type="FunCoup" id="Q13421">
    <property type="interactions" value="107"/>
</dbReference>
<dbReference type="IntAct" id="Q13421">
    <property type="interactions" value="29"/>
</dbReference>
<dbReference type="STRING" id="9606.ENSP00000372313"/>
<dbReference type="ChEMBL" id="CHEMBL3712878"/>
<dbReference type="DrugBank" id="DB12845">
    <property type="generic name" value="Amatuximab"/>
</dbReference>
<dbReference type="GlyConnect" id="1503">
    <property type="glycosylation" value="22 N-Linked glycans (3 sites)"/>
</dbReference>
<dbReference type="GlyCosmos" id="Q13421">
    <property type="glycosylation" value="4 sites, 23 glycans"/>
</dbReference>
<dbReference type="GlyGen" id="Q13421">
    <property type="glycosylation" value="6 sites, 30 N-linked glycans (4 sites), 1 O-linked glycan (1 site)"/>
</dbReference>
<dbReference type="iPTMnet" id="Q13421"/>
<dbReference type="PhosphoSitePlus" id="Q13421"/>
<dbReference type="SwissPalm" id="Q13421"/>
<dbReference type="BioMuta" id="MSLN"/>
<dbReference type="DMDM" id="116242654"/>
<dbReference type="jPOST" id="Q13421"/>
<dbReference type="MassIVE" id="Q13421"/>
<dbReference type="PaxDb" id="9606-ENSP00000372313"/>
<dbReference type="PeptideAtlas" id="Q13421"/>
<dbReference type="ProteomicsDB" id="59397">
    <molecule id="Q13421-1"/>
</dbReference>
<dbReference type="ProteomicsDB" id="59398">
    <molecule id="Q13421-2"/>
</dbReference>
<dbReference type="ProteomicsDB" id="59399">
    <molecule id="Q13421-3"/>
</dbReference>
<dbReference type="ProteomicsDB" id="59400">
    <molecule id="Q13421-4"/>
</dbReference>
<dbReference type="Pumba" id="Q13421"/>
<dbReference type="ABCD" id="Q13421">
    <property type="antibodies" value="135 sequenced antibodies"/>
</dbReference>
<dbReference type="Antibodypedia" id="2310">
    <property type="antibodies" value="1218 antibodies from 47 providers"/>
</dbReference>
<dbReference type="CPTC" id="Q13421">
    <property type="antibodies" value="2 antibodies"/>
</dbReference>
<dbReference type="DNASU" id="10232"/>
<dbReference type="Ensembl" id="ENST00000382862.7">
    <molecule id="Q13421-1"/>
    <property type="protein sequence ID" value="ENSP00000372313.3"/>
    <property type="gene ID" value="ENSG00000102854.16"/>
</dbReference>
<dbReference type="Ensembl" id="ENST00000545450.7">
    <molecule id="Q13421-3"/>
    <property type="protein sequence ID" value="ENSP00000442965.2"/>
    <property type="gene ID" value="ENSG00000102854.16"/>
</dbReference>
<dbReference type="Ensembl" id="ENST00000563941.5">
    <molecule id="Q13421-3"/>
    <property type="protein sequence ID" value="ENSP00000456008.1"/>
    <property type="gene ID" value="ENSG00000102854.16"/>
</dbReference>
<dbReference type="Ensembl" id="ENST00000566549.5">
    <molecule id="Q13421-3"/>
    <property type="protein sequence ID" value="ENSP00000456702.1"/>
    <property type="gene ID" value="ENSG00000102854.16"/>
</dbReference>
<dbReference type="GeneID" id="10232"/>
<dbReference type="KEGG" id="hsa:10232"/>
<dbReference type="MANE-Select" id="ENST00000545450.7">
    <molecule id="Q13421-3"/>
    <property type="protein sequence ID" value="ENSP00000442965.2"/>
    <property type="RefSeq nucleotide sequence ID" value="NM_005823.6"/>
    <property type="RefSeq protein sequence ID" value="NP_005814.2"/>
</dbReference>
<dbReference type="UCSC" id="uc002cjt.2">
    <molecule id="Q13421-1"/>
    <property type="organism name" value="human"/>
</dbReference>
<dbReference type="AGR" id="HGNC:7371"/>
<dbReference type="CTD" id="10232"/>
<dbReference type="DisGeNET" id="10232"/>
<dbReference type="GeneCards" id="MSLN"/>
<dbReference type="HGNC" id="HGNC:7371">
    <property type="gene designation" value="MSLN"/>
</dbReference>
<dbReference type="HPA" id="ENSG00000102854">
    <property type="expression patterns" value="Tissue enhanced (adipose tissue, fallopian tube)"/>
</dbReference>
<dbReference type="MIM" id="601051">
    <property type="type" value="gene"/>
</dbReference>
<dbReference type="neXtProt" id="NX_Q13421"/>
<dbReference type="OpenTargets" id="ENSG00000102854"/>
<dbReference type="PharmGKB" id="PA31176"/>
<dbReference type="VEuPathDB" id="HostDB:ENSG00000102854"/>
<dbReference type="eggNOG" id="ENOG502QRX1">
    <property type="taxonomic scope" value="Eukaryota"/>
</dbReference>
<dbReference type="GeneTree" id="ENSGT00950000182957"/>
<dbReference type="HOGENOM" id="CLU_014552_3_0_1"/>
<dbReference type="InParanoid" id="Q13421"/>
<dbReference type="OMA" id="NHLVCEM"/>
<dbReference type="OrthoDB" id="9329195at2759"/>
<dbReference type="PAN-GO" id="Q13421">
    <property type="GO annotations" value="2 GO annotations based on evolutionary models"/>
</dbReference>
<dbReference type="PhylomeDB" id="Q13421"/>
<dbReference type="TreeFam" id="TF331713"/>
<dbReference type="PathwayCommons" id="Q13421"/>
<dbReference type="Reactome" id="R-HSA-163125">
    <property type="pathway name" value="Post-translational modification: synthesis of GPI-anchored proteins"/>
</dbReference>
<dbReference type="Reactome" id="R-HSA-381426">
    <property type="pathway name" value="Regulation of Insulin-like Growth Factor (IGF) transport and uptake by Insulin-like Growth Factor Binding Proteins (IGFBPs)"/>
</dbReference>
<dbReference type="Reactome" id="R-HSA-8957275">
    <property type="pathway name" value="Post-translational protein phosphorylation"/>
</dbReference>
<dbReference type="SignaLink" id="Q13421"/>
<dbReference type="SIGNOR" id="Q13421"/>
<dbReference type="BioGRID-ORCS" id="10232">
    <property type="hits" value="12 hits in 1146 CRISPR screens"/>
</dbReference>
<dbReference type="ChiTaRS" id="MSLN">
    <property type="organism name" value="human"/>
</dbReference>
<dbReference type="EvolutionaryTrace" id="Q13421"/>
<dbReference type="GeneWiki" id="Mesothelin"/>
<dbReference type="GenomeRNAi" id="10232"/>
<dbReference type="Pharos" id="Q13421">
    <property type="development level" value="Tbio"/>
</dbReference>
<dbReference type="PRO" id="PR:Q13421"/>
<dbReference type="Proteomes" id="UP000005640">
    <property type="component" value="Chromosome 16"/>
</dbReference>
<dbReference type="RNAct" id="Q13421">
    <property type="molecule type" value="protein"/>
</dbReference>
<dbReference type="Bgee" id="ENSG00000102854">
    <property type="expression patterns" value="Expressed in right uterine tube and 132 other cell types or tissues"/>
</dbReference>
<dbReference type="ExpressionAtlas" id="Q13421">
    <property type="expression patterns" value="baseline and differential"/>
</dbReference>
<dbReference type="GO" id="GO:0009986">
    <property type="term" value="C:cell surface"/>
    <property type="evidence" value="ECO:0000318"/>
    <property type="project" value="GO_Central"/>
</dbReference>
<dbReference type="GO" id="GO:0005788">
    <property type="term" value="C:endoplasmic reticulum lumen"/>
    <property type="evidence" value="ECO:0000304"/>
    <property type="project" value="Reactome"/>
</dbReference>
<dbReference type="GO" id="GO:0005576">
    <property type="term" value="C:extracellular region"/>
    <property type="evidence" value="ECO:0000304"/>
    <property type="project" value="Reactome"/>
</dbReference>
<dbReference type="GO" id="GO:0005794">
    <property type="term" value="C:Golgi apparatus"/>
    <property type="evidence" value="ECO:0007669"/>
    <property type="project" value="UniProtKB-SubCell"/>
</dbReference>
<dbReference type="GO" id="GO:0016020">
    <property type="term" value="C:membrane"/>
    <property type="evidence" value="ECO:0000303"/>
    <property type="project" value="UniProtKB"/>
</dbReference>
<dbReference type="GO" id="GO:0005886">
    <property type="term" value="C:plasma membrane"/>
    <property type="evidence" value="ECO:0000304"/>
    <property type="project" value="Reactome"/>
</dbReference>
<dbReference type="GO" id="GO:0098552">
    <property type="term" value="C:side of membrane"/>
    <property type="evidence" value="ECO:0007669"/>
    <property type="project" value="UniProtKB-KW"/>
</dbReference>
<dbReference type="GO" id="GO:0007155">
    <property type="term" value="P:cell adhesion"/>
    <property type="evidence" value="ECO:0000303"/>
    <property type="project" value="UniProtKB"/>
</dbReference>
<dbReference type="GO" id="GO:0007160">
    <property type="term" value="P:cell-matrix adhesion"/>
    <property type="evidence" value="ECO:0000318"/>
    <property type="project" value="GO_Central"/>
</dbReference>
<dbReference type="FunFam" id="1.20.970.40:FF:000001">
    <property type="entry name" value="Mesothelin"/>
    <property type="match status" value="1"/>
</dbReference>
<dbReference type="Gene3D" id="1.20.970.40">
    <property type="match status" value="1"/>
</dbReference>
<dbReference type="InterPro" id="IPR010335">
    <property type="entry name" value="Mesothelin"/>
</dbReference>
<dbReference type="InterPro" id="IPR026664">
    <property type="entry name" value="Stereocilin-rel"/>
</dbReference>
<dbReference type="PANTHER" id="PTHR23412:SF6">
    <property type="entry name" value="MESOTHELIN"/>
    <property type="match status" value="1"/>
</dbReference>
<dbReference type="PANTHER" id="PTHR23412">
    <property type="entry name" value="STEREOCILIN RELATED"/>
    <property type="match status" value="1"/>
</dbReference>
<dbReference type="Pfam" id="PF06060">
    <property type="entry name" value="Mesothelin"/>
    <property type="match status" value="1"/>
</dbReference>
<sequence>MALPTARPLLGSCGTPALGSLLFLLFSLGWVQPSRTLAGETGQEAAPLDGVLANPPNISSLSPRQLLGFPCAEVSGLSTERVRELAVALAQKNVKLSTEQLRCLAHRLSEPPEDLDALPLDLLLFLNPDAFSGPQACTRFFSRITKANVDLLPRGAPERQRLLPAALACWGVRGSLLSEADVRALGGLACDLPGRFVAESAEVLLPRLVSCPGPLDQDQQEAARAALQGGGPPYGPPSTWSVSTMDALRGLLPVLGQPIIRSIPQGIVAAWRQRSSRDPSWRQPERTILRPRFRREVEKTACPSGKKAREIDESLIFYKKWELEACVDAALLATQMDRVNAIPFTYEQLDVLKHKLDELYPQGYPESVIQHLGYLFLKMSPEDIRKWNVTSLETLKALLEVNKGHEMSPQAPRRPLPQVATLIDRFVKGRGQLDKDTLDTLTAFYPGYLCSLSPEELSSVPPSSIWAVRPQDLDTCDPRQLDVLYPKARLAFQNMNGSEYFVKIQSFLGGAPTEDLKALSQQNVSMDLATFMKLRTDAVLPLTVAEVQKLLGPHVEGLKAEERHRPVRDWILRQRQDDLDTLGLGLQGGIPNGYLVLDLSMQEALSGTPCLLGPGPVLTVLALLLASTLA</sequence>
<keyword id="KW-0002">3D-structure</keyword>
<keyword id="KW-0025">Alternative splicing</keyword>
<keyword id="KW-0130">Cell adhesion</keyword>
<keyword id="KW-1003">Cell membrane</keyword>
<keyword id="KW-0165">Cleavage on pair of basic residues</keyword>
<keyword id="KW-0903">Direct protein sequencing</keyword>
<keyword id="KW-1015">Disulfide bond</keyword>
<keyword id="KW-0325">Glycoprotein</keyword>
<keyword id="KW-0333">Golgi apparatus</keyword>
<keyword id="KW-0336">GPI-anchor</keyword>
<keyword id="KW-0449">Lipoprotein</keyword>
<keyword id="KW-0472">Membrane</keyword>
<keyword id="KW-0597">Phosphoprotein</keyword>
<keyword id="KW-1267">Proteomics identification</keyword>
<keyword id="KW-1185">Reference proteome</keyword>
<keyword id="KW-0964">Secreted</keyword>
<keyword id="KW-0732">Signal</keyword>
<accession>Q13421</accession>
<accession>D3DU65</accession>
<accession>Q14859</accession>
<accession>Q4VQD5</accession>
<accession>Q96GR6</accession>
<accession>Q96KJ5</accession>
<accession>Q9BR17</accession>
<accession>Q9BTR2</accession>
<accession>Q9UCB2</accession>
<accession>Q9UK57</accession>
<feature type="signal peptide" evidence="10">
    <location>
        <begin position="1"/>
        <end position="36"/>
    </location>
</feature>
<feature type="chain" id="PRO_0000253559" description="Mesothelin">
    <location>
        <begin position="37"/>
        <end position="606"/>
    </location>
</feature>
<feature type="chain" id="PRO_0000253560" description="Megakaryocyte-potentiating factor">
    <location>
        <begin position="37"/>
        <end position="286"/>
    </location>
</feature>
<feature type="chain" id="PRO_0000253561" description="Mesothelin, cleaved form">
    <location>
        <begin position="296"/>
        <end position="606"/>
    </location>
</feature>
<feature type="propeptide" id="PRO_0000021769" description="Removed in mature form" evidence="1">
    <location>
        <begin position="607"/>
        <end position="630"/>
    </location>
</feature>
<feature type="region of interest" description="Required for megakaryocyte-potentiating factor activity">
    <location>
        <begin position="262"/>
        <end position="286"/>
    </location>
</feature>
<feature type="modified residue" description="Phosphoserine; by FAM20C" evidence="9">
    <location>
        <position position="200"/>
    </location>
</feature>
<feature type="lipid moiety-binding region" description="GPI-anchor amidated serine" evidence="1">
    <location>
        <position position="606"/>
    </location>
</feature>
<feature type="glycosylation site" description="N-linked (GlcNAc...) asparagine" evidence="18">
    <location>
        <position position="57"/>
    </location>
</feature>
<feature type="glycosylation site" description="N-linked (GlcNAc...) asparagine" evidence="1">
    <location>
        <position position="388"/>
    </location>
</feature>
<feature type="glycosylation site" description="N-linked (GlcNAc...) asparagine" evidence="1">
    <location>
        <position position="496"/>
    </location>
</feature>
<feature type="glycosylation site" description="N-linked (GlcNAc...) asparagine" evidence="1">
    <location>
        <position position="523"/>
    </location>
</feature>
<feature type="disulfide bond" evidence="8">
    <location>
        <begin position="302"/>
        <end position="326"/>
    </location>
</feature>
<feature type="splice variant" id="VSP_021058" description="In isoform 4." evidence="15">
    <location>
        <position position="44"/>
    </location>
</feature>
<feature type="splice variant" id="VSP_021059" description="In isoform 2, isoform 3 and isoform 4." evidence="13 14 15 16 17">
    <location>
        <begin position="409"/>
        <end position="416"/>
    </location>
</feature>
<feature type="splice variant" id="VSP_021060" description="In isoform 3." evidence="13">
    <original>MQEALSGTPCLLGPGPVLTVLALLLASTLA</original>
    <variation>VQGGRGGQARAGGRAGGVEVGALSHPSLCRGPLGDALPPRTWTCSHRPGTAPSLHPGLRAPLPC</variation>
    <location>
        <begin position="601"/>
        <end position="630"/>
    </location>
</feature>
<feature type="sequence variant" id="VAR_028381" description="In dbSNP:rs9927389.">
    <original>A</original>
    <variation>V</variation>
    <location>
        <position position="72"/>
    </location>
</feature>
<feature type="sequence variant" id="VAR_028382" description="In dbSNP:rs17850474." evidence="4">
    <original>R</original>
    <variation>P</variation>
    <location>
        <position position="309"/>
    </location>
</feature>
<feature type="sequence variant" id="VAR_054012" description="In dbSNP:rs35935235.">
    <original>G</original>
    <variation>E</variation>
    <location>
        <position position="497"/>
    </location>
</feature>
<feature type="sequence variant" id="VAR_028383" description="In dbSNP:rs1135210." evidence="2 4 5 6 10 12">
    <original>M</original>
    <variation>V</variation>
    <location>
        <position position="601"/>
    </location>
</feature>
<feature type="sequence conflict" description="In Ref. 2; AAC50348." evidence="18" ref="2">
    <original>PTARPLLG</original>
    <variation>QRLDPCW</variation>
    <location>
        <begin position="4"/>
        <end position="11"/>
    </location>
</feature>
<feature type="sequence conflict" description="In Ref. 2; AAC50348." evidence="18" ref="2">
    <original>TPAL</original>
    <variation>DRP</variation>
    <location>
        <begin position="15"/>
        <end position="18"/>
    </location>
</feature>
<feature type="sequence conflict" description="In Ref. 2; AAC50348." evidence="18" ref="2">
    <original>QPS</original>
    <variation>HPA</variation>
    <location>
        <begin position="32"/>
        <end position="34"/>
    </location>
</feature>
<feature type="sequence conflict" description="In Ref. 2; AAC50348." evidence="18" ref="2">
    <original>QEA</original>
    <variation>TES</variation>
    <location>
        <begin position="43"/>
        <end position="45"/>
    </location>
</feature>
<feature type="sequence conflict" description="In Ref. 2; AAC50348." evidence="18" ref="2">
    <original>D</original>
    <variation>G</variation>
    <location>
        <position position="49"/>
    </location>
</feature>
<feature type="sequence conflict" description="In Ref. 2; AAC50348." evidence="18" ref="2">
    <original>ANPP</original>
    <variation>TTPH</variation>
    <location>
        <begin position="53"/>
        <end position="56"/>
    </location>
</feature>
<feature type="sequence conflict" description="In Ref. 4; AAV87530." evidence="18" ref="4">
    <original>R</original>
    <variation>H</variation>
    <location>
        <position position="139"/>
    </location>
</feature>
<feature type="sequence conflict" description="In Ref. 2; AAC50348." evidence="18" ref="2">
    <original>N</original>
    <variation>D</variation>
    <location>
        <position position="402"/>
    </location>
</feature>
<feature type="sequence conflict" description="In Ref. 2; AAC50348." evidence="18" ref="2">
    <original>A</original>
    <variation>T</variation>
    <location>
        <position position="604"/>
    </location>
</feature>
<feature type="strand" evidence="21">
    <location>
        <begin position="308"/>
        <end position="310"/>
    </location>
</feature>
<feature type="helix" evidence="19">
    <location>
        <begin position="313"/>
        <end position="317"/>
    </location>
</feature>
<feature type="helix" evidence="19">
    <location>
        <begin position="320"/>
        <end position="326"/>
    </location>
</feature>
<feature type="helix" evidence="19">
    <location>
        <begin position="329"/>
        <end position="334"/>
    </location>
</feature>
<feature type="helix" evidence="19">
    <location>
        <begin position="336"/>
        <end position="338"/>
    </location>
</feature>
<feature type="turn" evidence="19">
    <location>
        <begin position="339"/>
        <end position="341"/>
    </location>
</feature>
<feature type="helix" evidence="19">
    <location>
        <begin position="346"/>
        <end position="359"/>
    </location>
</feature>
<feature type="helix" evidence="19">
    <location>
        <begin position="366"/>
        <end position="369"/>
    </location>
</feature>
<feature type="helix" evidence="19">
    <location>
        <begin position="373"/>
        <end position="378"/>
    </location>
</feature>
<feature type="helix" evidence="19">
    <location>
        <begin position="381"/>
        <end position="385"/>
    </location>
</feature>
<feature type="helix" evidence="19">
    <location>
        <begin position="392"/>
        <end position="401"/>
    </location>
</feature>
<feature type="turn" evidence="19">
    <location>
        <begin position="402"/>
        <end position="404"/>
    </location>
</feature>
<feature type="helix" evidence="19">
    <location>
        <begin position="419"/>
        <end position="430"/>
    </location>
</feature>
<feature type="helix" evidence="19">
    <location>
        <begin position="435"/>
        <end position="444"/>
    </location>
</feature>
<feature type="helix" evidence="23">
    <location>
        <begin position="446"/>
        <end position="448"/>
    </location>
</feature>
<feature type="helix" evidence="19">
    <location>
        <begin position="449"/>
        <end position="451"/>
    </location>
</feature>
<feature type="helix" evidence="19">
    <location>
        <begin position="454"/>
        <end position="458"/>
    </location>
</feature>
<feature type="helix" evidence="19">
    <location>
        <begin position="462"/>
        <end position="467"/>
    </location>
</feature>
<feature type="helix" evidence="19">
    <location>
        <begin position="470"/>
        <end position="473"/>
    </location>
</feature>
<feature type="helix" evidence="19">
    <location>
        <begin position="478"/>
        <end position="491"/>
    </location>
</feature>
<feature type="turn" evidence="19">
    <location>
        <begin position="492"/>
        <end position="494"/>
    </location>
</feature>
<feature type="helix" evidence="19">
    <location>
        <begin position="497"/>
        <end position="504"/>
    </location>
</feature>
<feature type="helix" evidence="19">
    <location>
        <begin position="505"/>
        <end position="507"/>
    </location>
</feature>
<feature type="helix" evidence="20">
    <location>
        <begin position="508"/>
        <end position="510"/>
    </location>
</feature>
<feature type="helix" evidence="22">
    <location>
        <begin position="513"/>
        <end position="521"/>
    </location>
</feature>
<feature type="helix" evidence="22">
    <location>
        <begin position="528"/>
        <end position="531"/>
    </location>
</feature>
<feature type="helix" evidence="22">
    <location>
        <begin position="536"/>
        <end position="539"/>
    </location>
</feature>
<feature type="helix" evidence="22">
    <location>
        <begin position="544"/>
        <end position="551"/>
    </location>
</feature>
<feature type="helix" evidence="22">
    <location>
        <begin position="552"/>
        <end position="561"/>
    </location>
</feature>
<feature type="strand" evidence="23">
    <location>
        <begin position="562"/>
        <end position="564"/>
    </location>
</feature>
<feature type="helix" evidence="22">
    <location>
        <begin position="565"/>
        <end position="571"/>
    </location>
</feature>
<feature type="helix" evidence="22">
    <location>
        <begin position="576"/>
        <end position="579"/>
    </location>
</feature>
<feature type="helix" evidence="22">
    <location>
        <begin position="580"/>
        <end position="582"/>
    </location>
</feature>
<proteinExistence type="evidence at protein level"/>
<protein>
    <recommendedName>
        <fullName>Mesothelin</fullName>
    </recommendedName>
    <alternativeName>
        <fullName>CAK1 antigen</fullName>
    </alternativeName>
    <alternativeName>
        <fullName>Pre-pro-megakaryocyte-potentiating factor</fullName>
    </alternativeName>
    <component>
        <recommendedName>
            <fullName>Megakaryocyte-potentiating factor</fullName>
            <shortName>MPF</shortName>
        </recommendedName>
    </component>
    <component>
        <recommendedName>
            <fullName>Mesothelin, cleaved form</fullName>
        </recommendedName>
    </component>
</protein>
<reference key="1">
    <citation type="journal article" date="1995" name="J. Biol. Chem.">
        <title>Molecular cloning and expression of megakaryocyte potentiating factor cDNA.</title>
        <authorList>
            <person name="Kojima T."/>
            <person name="Oh-Eda M."/>
            <person name="Hattori K."/>
            <person name="Taniguchi Y."/>
            <person name="Tamura M."/>
            <person name="Ochi N."/>
            <person name="Yamaguchi N."/>
        </authorList>
    </citation>
    <scope>NUCLEOTIDE SEQUENCE [MRNA] (ISOFORM 2)</scope>
    <scope>PROTEIN SEQUENCE OF 37-54 AND 90-117</scope>
    <scope>TISSUE SPECIFICITY</scope>
    <scope>VARIANT VAL-601</scope>
    <source>
        <tissue>Pancreatic cancer</tissue>
    </source>
</reference>
<reference key="2">
    <citation type="journal article" date="1996" name="Proc. Natl. Acad. Sci. U.S.A.">
        <title>Molecular cloning of mesothelin, a differentiation antigen present on mesothelium, mesotheliomas, and ovarian cancers.</title>
        <authorList>
            <person name="Chang K."/>
            <person name="Pastan I."/>
        </authorList>
    </citation>
    <scope>NUCLEOTIDE SEQUENCE [MRNA] (ISOFORM 1)</scope>
    <scope>SUBCELLULAR LOCATION</scope>
    <scope>GPI-ANCHOR</scope>
    <scope>GLYCOSYLATION</scope>
    <scope>CLEAVAGE</scope>
    <scope>VARIANT VAL-601</scope>
    <source>
        <tissue>Carcinoma</tissue>
    </source>
</reference>
<reference key="3">
    <citation type="journal article" date="2004" name="BMC Cancer">
        <title>Characterization of human mesothelin transcripts in ovarian and pancreatic cancer.</title>
        <authorList>
            <person name="Muminova Z.E."/>
            <person name="Strong T.V."/>
            <person name="Shaw D.R."/>
        </authorList>
    </citation>
    <scope>NUCLEOTIDE SEQUENCE [MRNA] (ISOFORM 2)</scope>
    <scope>ALTERNATIVE SPLICING (ISOFORMS 2 AND 3)</scope>
</reference>
<reference key="4">
    <citation type="journal article" date="2005" name="Clin. Cancer Res.">
        <title>Humoral immune response to mesothelin in mesothelioma and ovarian cancer patients.</title>
        <authorList>
            <person name="Ho M."/>
            <person name="Hassan R."/>
            <person name="Zhang J."/>
            <person name="Wang Q.-C."/>
            <person name="Onda M."/>
            <person name="Bera T."/>
            <person name="Pastan I."/>
        </authorList>
    </citation>
    <scope>NUCLEOTIDE SEQUENCE [MRNA] (ISOFORM 2)</scope>
    <scope>DISEASE</scope>
    <scope>VARIANT VAL-601</scope>
    <source>
        <tissue>Lung</tissue>
        <tissue>Spleen</tissue>
    </source>
</reference>
<reference key="5">
    <citation type="journal article" date="2001" name="Hum. Mol. Genet.">
        <title>Sequence, structure and pathology of the fully annotated terminal 2 Mb of the short arm of human chromosome 16.</title>
        <authorList>
            <person name="Daniels R.J."/>
            <person name="Peden J.F."/>
            <person name="Lloyd C."/>
            <person name="Horsley S.W."/>
            <person name="Clark K."/>
            <person name="Tufarelli C."/>
            <person name="Kearney L."/>
            <person name="Buckle V.J."/>
            <person name="Doggett N.A."/>
            <person name="Flint J."/>
            <person name="Higgs D.R."/>
        </authorList>
    </citation>
    <scope>NUCLEOTIDE SEQUENCE [LARGE SCALE GENOMIC DNA]</scope>
</reference>
<reference key="6">
    <citation type="submission" date="2005-09" db="EMBL/GenBank/DDBJ databases">
        <authorList>
            <person name="Mural R.J."/>
            <person name="Istrail S."/>
            <person name="Sutton G.G."/>
            <person name="Florea L."/>
            <person name="Halpern A.L."/>
            <person name="Mobarry C.M."/>
            <person name="Lippert R."/>
            <person name="Walenz B."/>
            <person name="Shatkay H."/>
            <person name="Dew I."/>
            <person name="Miller J.R."/>
            <person name="Flanigan M.J."/>
            <person name="Edwards N.J."/>
            <person name="Bolanos R."/>
            <person name="Fasulo D."/>
            <person name="Halldorsson B.V."/>
            <person name="Hannenhalli S."/>
            <person name="Turner R."/>
            <person name="Yooseph S."/>
            <person name="Lu F."/>
            <person name="Nusskern D.R."/>
            <person name="Shue B.C."/>
            <person name="Zheng X.H."/>
            <person name="Zhong F."/>
            <person name="Delcher A.L."/>
            <person name="Huson D.H."/>
            <person name="Kravitz S.A."/>
            <person name="Mouchard L."/>
            <person name="Reinert K."/>
            <person name="Remington K.A."/>
            <person name="Clark A.G."/>
            <person name="Waterman M.S."/>
            <person name="Eichler E.E."/>
            <person name="Adams M.D."/>
            <person name="Hunkapiller M.W."/>
            <person name="Myers E.W."/>
            <person name="Venter J.C."/>
        </authorList>
    </citation>
    <scope>NUCLEOTIDE SEQUENCE [LARGE SCALE GENOMIC DNA]</scope>
</reference>
<reference key="7">
    <citation type="journal article" date="2004" name="Nature">
        <title>The sequence and analysis of duplication-rich human chromosome 16.</title>
        <authorList>
            <person name="Martin J."/>
            <person name="Han C."/>
            <person name="Gordon L.A."/>
            <person name="Terry A."/>
            <person name="Prabhakar S."/>
            <person name="She X."/>
            <person name="Xie G."/>
            <person name="Hellsten U."/>
            <person name="Chan Y.M."/>
            <person name="Altherr M."/>
            <person name="Couronne O."/>
            <person name="Aerts A."/>
            <person name="Bajorek E."/>
            <person name="Black S."/>
            <person name="Blumer H."/>
            <person name="Branscomb E."/>
            <person name="Brown N.C."/>
            <person name="Bruno W.J."/>
            <person name="Buckingham J.M."/>
            <person name="Callen D.F."/>
            <person name="Campbell C.S."/>
            <person name="Campbell M.L."/>
            <person name="Campbell E.W."/>
            <person name="Caoile C."/>
            <person name="Challacombe J.F."/>
            <person name="Chasteen L.A."/>
            <person name="Chertkov O."/>
            <person name="Chi H.C."/>
            <person name="Christensen M."/>
            <person name="Clark L.M."/>
            <person name="Cohn J.D."/>
            <person name="Denys M."/>
            <person name="Detter J.C."/>
            <person name="Dickson M."/>
            <person name="Dimitrijevic-Bussod M."/>
            <person name="Escobar J."/>
            <person name="Fawcett J.J."/>
            <person name="Flowers D."/>
            <person name="Fotopulos D."/>
            <person name="Glavina T."/>
            <person name="Gomez M."/>
            <person name="Gonzales E."/>
            <person name="Goodstein D."/>
            <person name="Goodwin L.A."/>
            <person name="Grady D.L."/>
            <person name="Grigoriev I."/>
            <person name="Groza M."/>
            <person name="Hammon N."/>
            <person name="Hawkins T."/>
            <person name="Haydu L."/>
            <person name="Hildebrand C.E."/>
            <person name="Huang W."/>
            <person name="Israni S."/>
            <person name="Jett J."/>
            <person name="Jewett P.B."/>
            <person name="Kadner K."/>
            <person name="Kimball H."/>
            <person name="Kobayashi A."/>
            <person name="Krawczyk M.-C."/>
            <person name="Leyba T."/>
            <person name="Longmire J.L."/>
            <person name="Lopez F."/>
            <person name="Lou Y."/>
            <person name="Lowry S."/>
            <person name="Ludeman T."/>
            <person name="Manohar C.F."/>
            <person name="Mark G.A."/>
            <person name="McMurray K.L."/>
            <person name="Meincke L.J."/>
            <person name="Morgan J."/>
            <person name="Moyzis R.K."/>
            <person name="Mundt M.O."/>
            <person name="Munk A.C."/>
            <person name="Nandkeshwar R.D."/>
            <person name="Pitluck S."/>
            <person name="Pollard M."/>
            <person name="Predki P."/>
            <person name="Parson-Quintana B."/>
            <person name="Ramirez L."/>
            <person name="Rash S."/>
            <person name="Retterer J."/>
            <person name="Ricke D.O."/>
            <person name="Robinson D.L."/>
            <person name="Rodriguez A."/>
            <person name="Salamov A."/>
            <person name="Saunders E.H."/>
            <person name="Scott D."/>
            <person name="Shough T."/>
            <person name="Stallings R.L."/>
            <person name="Stalvey M."/>
            <person name="Sutherland R.D."/>
            <person name="Tapia R."/>
            <person name="Tesmer J.G."/>
            <person name="Thayer N."/>
            <person name="Thompson L.S."/>
            <person name="Tice H."/>
            <person name="Torney D.C."/>
            <person name="Tran-Gyamfi M."/>
            <person name="Tsai M."/>
            <person name="Ulanovsky L.E."/>
            <person name="Ustaszewska A."/>
            <person name="Vo N."/>
            <person name="White P.S."/>
            <person name="Williams A.L."/>
            <person name="Wills P.L."/>
            <person name="Wu J.-R."/>
            <person name="Wu K."/>
            <person name="Yang J."/>
            <person name="DeJong P."/>
            <person name="Bruce D."/>
            <person name="Doggett N.A."/>
            <person name="Deaven L."/>
            <person name="Schmutz J."/>
            <person name="Grimwood J."/>
            <person name="Richardson P."/>
            <person name="Rokhsar D.S."/>
            <person name="Eichler E.E."/>
            <person name="Gilna P."/>
            <person name="Lucas S.M."/>
            <person name="Myers R.M."/>
            <person name="Rubin E.M."/>
            <person name="Pennacchio L.A."/>
        </authorList>
    </citation>
    <scope>NUCLEOTIDE SEQUENCE [LARGE SCALE GENOMIC DNA]</scope>
    <scope>VARIANT VAL-601</scope>
</reference>
<reference key="8">
    <citation type="journal article" date="2004" name="Genome Res.">
        <title>The status, quality, and expansion of the NIH full-length cDNA project: the Mammalian Gene Collection (MGC).</title>
        <authorList>
            <consortium name="The MGC Project Team"/>
        </authorList>
    </citation>
    <scope>NUCLEOTIDE SEQUENCE [LARGE SCALE MRNA] (ISOFORMS 2 AND 4)</scope>
    <scope>VARIANTS PRO-309 AND VAL-601</scope>
    <source>
        <tissue>Pancreas</tissue>
        <tissue>Placenta</tissue>
    </source>
</reference>
<reference key="9">
    <citation type="journal article" date="1994" name="J. Biol. Chem.">
        <title>A novel cytokine exhibiting megakaryocyte potentiating activity from a human pancreatic tumor cell line HPC-Y5.</title>
        <authorList>
            <person name="Yamaguchi N."/>
            <person name="Hattori K."/>
            <person name="Oh-eda M."/>
            <person name="Kojima T."/>
            <person name="Imai N."/>
            <person name="Ochi N."/>
        </authorList>
    </citation>
    <scope>PROTEIN SEQUENCE OF 37-54 (ISOFORMS 1/2/3)</scope>
    <scope>GLYCOSYLATION</scope>
    <scope>FUNCTION</scope>
    <source>
        <tissue>Pancreatic tumor</tissue>
    </source>
</reference>
<reference key="10">
    <citation type="journal article" date="2015" name="J. Proteome Res.">
        <title>Human basal tear peptidome characterization by CID, HCD, and ETD followed by in silico and in vitro analyses for antimicrobial peptide identification.</title>
        <authorList>
            <person name="Azkargorta M."/>
            <person name="Soria J."/>
            <person name="Ojeda C."/>
            <person name="Guzman F."/>
            <person name="Acera A."/>
            <person name="Iloro I."/>
            <person name="Suarez T."/>
            <person name="Elortza F."/>
        </authorList>
    </citation>
    <scope>PROTEIN SEQUENCE OF 279-293</scope>
    <scope>IDENTIFICATION BY MASS SPECTROMETRY</scope>
    <source>
        <tissue>Tear</tissue>
    </source>
</reference>
<reference key="11">
    <citation type="journal article" date="1999" name="Proc. Natl. Acad. Sci. U.S.A.">
        <title>Soluble member(s) of the mesothelin/megakaryocyte potentiating factor family are detectable in sera from patients with ovarian carcinoma.</title>
        <authorList>
            <person name="Scholler N."/>
            <person name="Fu N."/>
            <person name="Yang Y."/>
            <person name="Ye Z."/>
            <person name="Goodman G.E."/>
            <person name="Hellstroem K.E."/>
            <person name="Hellstroem I."/>
        </authorList>
    </citation>
    <scope>NUCLEOTIDE SEQUENCE [MRNA] OF 297-630 (ISOFORM 3)</scope>
    <scope>PROTEIN SEQUENCE OF 296-314</scope>
    <scope>VARIANT VAL-601</scope>
</reference>
<reference key="12">
    <citation type="journal article" date="2004" name="J. Biol. Chem.">
        <title>Binding of ovarian cancer antigen CA125/MUC16 to mesothelin mediates cell adhesion.</title>
        <authorList>
            <person name="Rump A."/>
            <person name="Morikawa Y."/>
            <person name="Tanaka M."/>
            <person name="Minami S."/>
            <person name="Umesaki N."/>
            <person name="Takeuchi M."/>
            <person name="Miyajima A."/>
        </authorList>
    </citation>
    <scope>INTERACTION WITH MUC16</scope>
    <scope>FUNCTION</scope>
</reference>
<reference key="13">
    <citation type="journal article" date="2006" name="Clin. Cancer Res.">
        <title>Megakaryocyte potentiation factor cleaved from mesothelin precursor is a useful tumor marker in the serum of patients with mesothelioma.</title>
        <authorList>
            <person name="Onda M."/>
            <person name="Nagata S."/>
            <person name="Ho M."/>
            <person name="Bera T.K."/>
            <person name="Hassan R."/>
            <person name="Alexander R.H."/>
            <person name="Pastan I."/>
        </authorList>
    </citation>
    <scope>GLYCOSYLATION</scope>
    <scope>TISSUE SPECIFICITY</scope>
</reference>
<reference key="14">
    <citation type="journal article" date="2015" name="Cell">
        <title>A single kinase generates the majority of the secreted phosphoproteome.</title>
        <authorList>
            <person name="Tagliabracci V.S."/>
            <person name="Wiley S.E."/>
            <person name="Guo X."/>
            <person name="Kinch L.N."/>
            <person name="Durrant E."/>
            <person name="Wen J."/>
            <person name="Xiao J."/>
            <person name="Cui J."/>
            <person name="Nguyen K.B."/>
            <person name="Engel J.L."/>
            <person name="Coon J.J."/>
            <person name="Grishin N."/>
            <person name="Pinna L.A."/>
            <person name="Pagliarini D.J."/>
            <person name="Dixon J.E."/>
        </authorList>
    </citation>
    <scope>PHOSPHORYLATION AT SER-200</scope>
</reference>
<reference key="15">
    <citation type="journal article" date="2012" name="J. Biol. Chem.">
        <title>Recognition of mesothelin by the therapeutic antibody MORAb-009: structural and mechanistic insights.</title>
        <authorList>
            <person name="Ma J."/>
            <person name="Tang W.K."/>
            <person name="Esser L."/>
            <person name="Pastan I."/>
            <person name="Xia D."/>
        </authorList>
    </citation>
    <scope>X-RAY CRYSTALLOGRAPHY (2.65 ANGSTROMS) OF 302-359 IN COMPLEX WITH ANTIBODY</scope>
    <scope>SUBCELLULAR LOCATION</scope>
    <scope>DISULFIDE BOND</scope>
</reference>
<evidence type="ECO:0000255" key="1"/>
<evidence type="ECO:0000269" key="2">
    <source>
    </source>
</evidence>
<evidence type="ECO:0000269" key="3">
    <source>
    </source>
</evidence>
<evidence type="ECO:0000269" key="4">
    <source>
    </source>
</evidence>
<evidence type="ECO:0000269" key="5">
    <source>
    </source>
</evidence>
<evidence type="ECO:0000269" key="6">
    <source>
    </source>
</evidence>
<evidence type="ECO:0000269" key="7">
    <source>
    </source>
</evidence>
<evidence type="ECO:0000269" key="8">
    <source>
    </source>
</evidence>
<evidence type="ECO:0000269" key="9">
    <source>
    </source>
</evidence>
<evidence type="ECO:0000269" key="10">
    <source>
    </source>
</evidence>
<evidence type="ECO:0000269" key="11">
    <source>
    </source>
</evidence>
<evidence type="ECO:0000269" key="12">
    <source>
    </source>
</evidence>
<evidence type="ECO:0000303" key="13">
    <source>
    </source>
</evidence>
<evidence type="ECO:0000303" key="14">
    <source>
    </source>
</evidence>
<evidence type="ECO:0000303" key="15">
    <source>
    </source>
</evidence>
<evidence type="ECO:0000303" key="16">
    <source>
    </source>
</evidence>
<evidence type="ECO:0000303" key="17">
    <source>
    </source>
</evidence>
<evidence type="ECO:0000305" key="18"/>
<evidence type="ECO:0007829" key="19">
    <source>
        <dbReference type="PDB" id="7U9J"/>
    </source>
</evidence>
<evidence type="ECO:0007829" key="20">
    <source>
        <dbReference type="PDB" id="7UED"/>
    </source>
</evidence>
<evidence type="ECO:0007829" key="21">
    <source>
        <dbReference type="PDB" id="8CYH"/>
    </source>
</evidence>
<evidence type="ECO:0007829" key="22">
    <source>
        <dbReference type="PDB" id="8CZ8"/>
    </source>
</evidence>
<evidence type="ECO:0007829" key="23">
    <source>
        <dbReference type="PDB" id="8FSL"/>
    </source>
</evidence>
<organism>
    <name type="scientific">Homo sapiens</name>
    <name type="common">Human</name>
    <dbReference type="NCBI Taxonomy" id="9606"/>
    <lineage>
        <taxon>Eukaryota</taxon>
        <taxon>Metazoa</taxon>
        <taxon>Chordata</taxon>
        <taxon>Craniata</taxon>
        <taxon>Vertebrata</taxon>
        <taxon>Euteleostomi</taxon>
        <taxon>Mammalia</taxon>
        <taxon>Eutheria</taxon>
        <taxon>Euarchontoglires</taxon>
        <taxon>Primates</taxon>
        <taxon>Haplorrhini</taxon>
        <taxon>Catarrhini</taxon>
        <taxon>Hominidae</taxon>
        <taxon>Homo</taxon>
    </lineage>
</organism>
<comment type="function">
    <text>Membrane-anchored forms may play a role in cellular adhesion.</text>
</comment>
<comment type="function">
    <text>Megakaryocyte-potentiating factor (MPF) potentiates megakaryocyte colony formation in vitro.</text>
</comment>
<comment type="subunit">
    <text evidence="3 8">Interacts with MUC16.</text>
</comment>
<comment type="interaction">
    <interactant intactId="EBI-12303989">
        <id>Q13421-3</id>
    </interactant>
    <interactant intactId="EBI-743771">
        <id>Q92624</id>
        <label>APPBP2</label>
    </interactant>
    <organismsDiffer>false</organismsDiffer>
    <experiments>3</experiments>
</comment>
<comment type="subcellular location">
    <subcellularLocation>
        <location>Cell membrane</location>
        <topology>Lipid-anchor</topology>
        <topology>GPI-anchor</topology>
    </subcellularLocation>
    <subcellularLocation>
        <location>Golgi apparatus</location>
    </subcellularLocation>
</comment>
<comment type="subcellular location">
    <molecule>Megakaryocyte-potentiating factor</molecule>
    <subcellularLocation>
        <location>Secreted</location>
    </subcellularLocation>
</comment>
<comment type="subcellular location">
    <molecule>Isoform 3</molecule>
    <subcellularLocation>
        <location>Secreted</location>
    </subcellularLocation>
</comment>
<comment type="alternative products">
    <event type="alternative splicing"/>
    <isoform>
        <id>Q13421-1</id>
        <name>1</name>
        <sequence type="displayed"/>
    </isoform>
    <isoform>
        <id>Q13421-3</id>
        <name>2</name>
        <sequence type="described" ref="VSP_021059"/>
    </isoform>
    <isoform>
        <id>Q13421-2</id>
        <name>3</name>
        <name>SMRP</name>
        <sequence type="described" ref="VSP_021059 VSP_021060"/>
    </isoform>
    <isoform>
        <id>Q13421-4</id>
        <name>4</name>
        <sequence type="described" ref="VSP_021058 VSP_021059"/>
    </isoform>
</comment>
<comment type="tissue specificity">
    <text evidence="7 10">Expressed in lung. Expressed at low levels in heart, placenta and kidney. Expressed in mesothelial cells. Highly expressed in mesotheliomas, ovarian cancers, and some squamous cell carcinomas (at protein level).</text>
</comment>
<comment type="PTM">
    <text evidence="7 11 12">Both MPF and the cleaved form of mesothelin are N-glycosylated.</text>
</comment>
<comment type="PTM">
    <text evidence="12">Proteolytically cleaved by a furin-like convertase to generate megakaryocyte-potentiating factor (MPF), and the cleaved form of mesothelin.</text>
</comment>
<comment type="disease">
    <text evidence="6">Antibodies against MSLN are detected in patients with mesothelioma and ovarian cancer.</text>
</comment>
<comment type="miscellaneous">
    <molecule>Isoform 1</molecule>
    <text>Minor form.</text>
</comment>
<comment type="miscellaneous">
    <molecule>Isoform 2</molecule>
    <text evidence="18">Major form.</text>
</comment>
<comment type="miscellaneous">
    <molecule>Isoform 3</molecule>
    <text evidence="18">Soluble form found in the sera from patients with ovarian carcinoma.</text>
</comment>
<comment type="similarity">
    <text evidence="18">Belongs to the mesothelin family.</text>
</comment>
<gene>
    <name type="primary">MSLN</name>
    <name type="synonym">MPF</name>
</gene>